<comment type="function">
    <text evidence="1">This is one of the proteins that binds to the 5S RNA in the ribosome where it forms part of the central protuberance.</text>
</comment>
<comment type="subunit">
    <text evidence="1">Part of the 50S ribosomal subunit; part of the 5S rRNA/L5/L18/L25 subcomplex. Contacts the 5S rRNA. Binds to the 5S rRNA independently of L5 and L18.</text>
</comment>
<comment type="similarity">
    <text evidence="1">Belongs to the bacterial ribosomal protein bL25 family. CTC subfamily.</text>
</comment>
<evidence type="ECO:0000255" key="1">
    <source>
        <dbReference type="HAMAP-Rule" id="MF_01334"/>
    </source>
</evidence>
<evidence type="ECO:0000305" key="2"/>
<keyword id="KW-0687">Ribonucleoprotein</keyword>
<keyword id="KW-0689">Ribosomal protein</keyword>
<keyword id="KW-0694">RNA-binding</keyword>
<keyword id="KW-0699">rRNA-binding</keyword>
<proteinExistence type="inferred from homology"/>
<reference key="1">
    <citation type="journal article" date="2004" name="Proc. Natl. Acad. Sci. U.S.A.">
        <title>Genomic analysis of Bacteroides fragilis reveals extensive DNA inversions regulating cell surface adaptation.</title>
        <authorList>
            <person name="Kuwahara T."/>
            <person name="Yamashita A."/>
            <person name="Hirakawa H."/>
            <person name="Nakayama H."/>
            <person name="Toh H."/>
            <person name="Okada N."/>
            <person name="Kuhara S."/>
            <person name="Hattori M."/>
            <person name="Hayashi T."/>
            <person name="Ohnishi Y."/>
        </authorList>
    </citation>
    <scope>NUCLEOTIDE SEQUENCE [LARGE SCALE GENOMIC DNA]</scope>
    <source>
        <strain>YCH46</strain>
    </source>
</reference>
<accession>Q64X29</accession>
<feature type="chain" id="PRO_0000181508" description="Large ribosomal subunit protein bL25">
    <location>
        <begin position="1"/>
        <end position="196"/>
    </location>
</feature>
<protein>
    <recommendedName>
        <fullName evidence="1">Large ribosomal subunit protein bL25</fullName>
    </recommendedName>
    <alternativeName>
        <fullName evidence="2">50S ribosomal protein L25</fullName>
    </alternativeName>
    <alternativeName>
        <fullName evidence="1">General stress protein CTC</fullName>
    </alternativeName>
</protein>
<dbReference type="EMBL" id="AP006841">
    <property type="protein sequence ID" value="BAD47947.1"/>
    <property type="molecule type" value="Genomic_DNA"/>
</dbReference>
<dbReference type="RefSeq" id="WP_005785759.1">
    <property type="nucleotide sequence ID" value="NZ_UYXF01000002.1"/>
</dbReference>
<dbReference type="RefSeq" id="YP_098481.1">
    <property type="nucleotide sequence ID" value="NC_006347.1"/>
</dbReference>
<dbReference type="SMR" id="Q64X29"/>
<dbReference type="STRING" id="295405.BF1197"/>
<dbReference type="KEGG" id="bfr:BF1197"/>
<dbReference type="PATRIC" id="fig|295405.11.peg.1185"/>
<dbReference type="HOGENOM" id="CLU_075939_2_1_10"/>
<dbReference type="OrthoDB" id="9786489at2"/>
<dbReference type="Proteomes" id="UP000002197">
    <property type="component" value="Chromosome"/>
</dbReference>
<dbReference type="GO" id="GO:0022625">
    <property type="term" value="C:cytosolic large ribosomal subunit"/>
    <property type="evidence" value="ECO:0007669"/>
    <property type="project" value="TreeGrafter"/>
</dbReference>
<dbReference type="GO" id="GO:0008097">
    <property type="term" value="F:5S rRNA binding"/>
    <property type="evidence" value="ECO:0007669"/>
    <property type="project" value="InterPro"/>
</dbReference>
<dbReference type="GO" id="GO:0003735">
    <property type="term" value="F:structural constituent of ribosome"/>
    <property type="evidence" value="ECO:0007669"/>
    <property type="project" value="InterPro"/>
</dbReference>
<dbReference type="GO" id="GO:0006412">
    <property type="term" value="P:translation"/>
    <property type="evidence" value="ECO:0007669"/>
    <property type="project" value="UniProtKB-UniRule"/>
</dbReference>
<dbReference type="CDD" id="cd00495">
    <property type="entry name" value="Ribosomal_L25_TL5_CTC"/>
    <property type="match status" value="1"/>
</dbReference>
<dbReference type="FunFam" id="2.170.120.20:FF:000001">
    <property type="entry name" value="50S ribosomal protein L25"/>
    <property type="match status" value="1"/>
</dbReference>
<dbReference type="FunFam" id="2.40.240.10:FF:000009">
    <property type="entry name" value="50S ribosomal protein L25"/>
    <property type="match status" value="1"/>
</dbReference>
<dbReference type="Gene3D" id="2.170.120.20">
    <property type="entry name" value="Ribosomal protein L25, beta domain"/>
    <property type="match status" value="1"/>
</dbReference>
<dbReference type="Gene3D" id="2.40.240.10">
    <property type="entry name" value="Ribosomal Protein L25, Chain P"/>
    <property type="match status" value="1"/>
</dbReference>
<dbReference type="HAMAP" id="MF_01334">
    <property type="entry name" value="Ribosomal_bL25_CTC"/>
    <property type="match status" value="1"/>
</dbReference>
<dbReference type="InterPro" id="IPR020056">
    <property type="entry name" value="Rbsml_bL25/Gln-tRNA_synth_N"/>
</dbReference>
<dbReference type="InterPro" id="IPR011035">
    <property type="entry name" value="Ribosomal_bL25/Gln-tRNA_synth"/>
</dbReference>
<dbReference type="InterPro" id="IPR020057">
    <property type="entry name" value="Ribosomal_bL25_b-dom"/>
</dbReference>
<dbReference type="InterPro" id="IPR037121">
    <property type="entry name" value="Ribosomal_bL25_C"/>
</dbReference>
<dbReference type="InterPro" id="IPR001021">
    <property type="entry name" value="Ribosomal_bL25_long"/>
</dbReference>
<dbReference type="InterPro" id="IPR029751">
    <property type="entry name" value="Ribosomal_L25_dom"/>
</dbReference>
<dbReference type="InterPro" id="IPR020930">
    <property type="entry name" value="Ribosomal_uL5_bac-type"/>
</dbReference>
<dbReference type="NCBIfam" id="TIGR00731">
    <property type="entry name" value="bL25_bact_ctc"/>
    <property type="match status" value="1"/>
</dbReference>
<dbReference type="NCBIfam" id="NF004132">
    <property type="entry name" value="PRK05618.2-2"/>
    <property type="match status" value="1"/>
</dbReference>
<dbReference type="PANTHER" id="PTHR33284">
    <property type="entry name" value="RIBOSOMAL PROTEIN L25/GLN-TRNA SYNTHETASE, ANTI-CODON-BINDING DOMAIN-CONTAINING PROTEIN"/>
    <property type="match status" value="1"/>
</dbReference>
<dbReference type="PANTHER" id="PTHR33284:SF1">
    <property type="entry name" value="RIBOSOMAL PROTEIN L25_GLN-TRNA SYNTHETASE, ANTI-CODON-BINDING DOMAIN-CONTAINING PROTEIN"/>
    <property type="match status" value="1"/>
</dbReference>
<dbReference type="Pfam" id="PF01386">
    <property type="entry name" value="Ribosomal_L25p"/>
    <property type="match status" value="1"/>
</dbReference>
<dbReference type="Pfam" id="PF14693">
    <property type="entry name" value="Ribosomal_TL5_C"/>
    <property type="match status" value="1"/>
</dbReference>
<dbReference type="SUPFAM" id="SSF50715">
    <property type="entry name" value="Ribosomal protein L25-like"/>
    <property type="match status" value="1"/>
</dbReference>
<organism>
    <name type="scientific">Bacteroides fragilis (strain YCH46)</name>
    <dbReference type="NCBI Taxonomy" id="295405"/>
    <lineage>
        <taxon>Bacteria</taxon>
        <taxon>Pseudomonadati</taxon>
        <taxon>Bacteroidota</taxon>
        <taxon>Bacteroidia</taxon>
        <taxon>Bacteroidales</taxon>
        <taxon>Bacteroidaceae</taxon>
        <taxon>Bacteroides</taxon>
    </lineage>
</organism>
<name>RL25_BACFR</name>
<sequence>MRSIEVKGTARTIAERSSEQARALKEIRNNGGVPCVLYGGEEVVHFTVTNEGLRNLVYTPHIYVVDLVIDGKKVNAILKDIQFHPVKDTILHVDFYQIDEAKPIVMEVPVQLEGLAEGVKAGGKLALQMRKLKVKALYNIIPEKLTINVSHLGLGKTVKVGELSYEGLELLNAKEAVVCAVKLTRAARGAAAAAGK</sequence>
<gene>
    <name evidence="1" type="primary">rplY</name>
    <name evidence="1" type="synonym">ctc</name>
    <name type="ordered locus">BF1197</name>
</gene>